<gene>
    <name evidence="1" type="primary">ruvB</name>
    <name type="ordered locus">CA_C2284</name>
</gene>
<dbReference type="EC" id="3.6.4.-" evidence="1"/>
<dbReference type="EMBL" id="AE001437">
    <property type="protein sequence ID" value="AAK80241.1"/>
    <property type="molecule type" value="Genomic_DNA"/>
</dbReference>
<dbReference type="PIR" id="F97181">
    <property type="entry name" value="F97181"/>
</dbReference>
<dbReference type="RefSeq" id="NP_348901.1">
    <property type="nucleotide sequence ID" value="NC_003030.1"/>
</dbReference>
<dbReference type="RefSeq" id="WP_010965582.1">
    <property type="nucleotide sequence ID" value="NC_003030.1"/>
</dbReference>
<dbReference type="SMR" id="Q97GT1"/>
<dbReference type="STRING" id="272562.CA_C2284"/>
<dbReference type="GeneID" id="44998762"/>
<dbReference type="KEGG" id="cac:CA_C2284"/>
<dbReference type="PATRIC" id="fig|272562.8.peg.2483"/>
<dbReference type="eggNOG" id="COG2255">
    <property type="taxonomic scope" value="Bacteria"/>
</dbReference>
<dbReference type="HOGENOM" id="CLU_055599_1_0_9"/>
<dbReference type="OrthoDB" id="9804478at2"/>
<dbReference type="Proteomes" id="UP000000814">
    <property type="component" value="Chromosome"/>
</dbReference>
<dbReference type="GO" id="GO:0005737">
    <property type="term" value="C:cytoplasm"/>
    <property type="evidence" value="ECO:0007669"/>
    <property type="project" value="UniProtKB-SubCell"/>
</dbReference>
<dbReference type="GO" id="GO:0048476">
    <property type="term" value="C:Holliday junction resolvase complex"/>
    <property type="evidence" value="ECO:0007669"/>
    <property type="project" value="UniProtKB-UniRule"/>
</dbReference>
<dbReference type="GO" id="GO:0005524">
    <property type="term" value="F:ATP binding"/>
    <property type="evidence" value="ECO:0007669"/>
    <property type="project" value="UniProtKB-UniRule"/>
</dbReference>
<dbReference type="GO" id="GO:0016887">
    <property type="term" value="F:ATP hydrolysis activity"/>
    <property type="evidence" value="ECO:0007669"/>
    <property type="project" value="InterPro"/>
</dbReference>
<dbReference type="GO" id="GO:0000400">
    <property type="term" value="F:four-way junction DNA binding"/>
    <property type="evidence" value="ECO:0007669"/>
    <property type="project" value="UniProtKB-UniRule"/>
</dbReference>
<dbReference type="GO" id="GO:0009378">
    <property type="term" value="F:four-way junction helicase activity"/>
    <property type="evidence" value="ECO:0007669"/>
    <property type="project" value="InterPro"/>
</dbReference>
<dbReference type="GO" id="GO:0006310">
    <property type="term" value="P:DNA recombination"/>
    <property type="evidence" value="ECO:0007669"/>
    <property type="project" value="UniProtKB-UniRule"/>
</dbReference>
<dbReference type="GO" id="GO:0006281">
    <property type="term" value="P:DNA repair"/>
    <property type="evidence" value="ECO:0007669"/>
    <property type="project" value="UniProtKB-UniRule"/>
</dbReference>
<dbReference type="CDD" id="cd00009">
    <property type="entry name" value="AAA"/>
    <property type="match status" value="1"/>
</dbReference>
<dbReference type="Gene3D" id="1.10.8.60">
    <property type="match status" value="1"/>
</dbReference>
<dbReference type="Gene3D" id="3.40.50.300">
    <property type="entry name" value="P-loop containing nucleotide triphosphate hydrolases"/>
    <property type="match status" value="1"/>
</dbReference>
<dbReference type="Gene3D" id="1.10.10.10">
    <property type="entry name" value="Winged helix-like DNA-binding domain superfamily/Winged helix DNA-binding domain"/>
    <property type="match status" value="1"/>
</dbReference>
<dbReference type="HAMAP" id="MF_00016">
    <property type="entry name" value="DNA_HJ_migration_RuvB"/>
    <property type="match status" value="1"/>
</dbReference>
<dbReference type="InterPro" id="IPR003593">
    <property type="entry name" value="AAA+_ATPase"/>
</dbReference>
<dbReference type="InterPro" id="IPR041445">
    <property type="entry name" value="AAA_lid_4"/>
</dbReference>
<dbReference type="InterPro" id="IPR004605">
    <property type="entry name" value="DNA_helicase_Holl-junc_RuvB"/>
</dbReference>
<dbReference type="InterPro" id="IPR027417">
    <property type="entry name" value="P-loop_NTPase"/>
</dbReference>
<dbReference type="InterPro" id="IPR008824">
    <property type="entry name" value="RuvB-like_N"/>
</dbReference>
<dbReference type="InterPro" id="IPR008823">
    <property type="entry name" value="RuvB_C"/>
</dbReference>
<dbReference type="InterPro" id="IPR036388">
    <property type="entry name" value="WH-like_DNA-bd_sf"/>
</dbReference>
<dbReference type="InterPro" id="IPR036390">
    <property type="entry name" value="WH_DNA-bd_sf"/>
</dbReference>
<dbReference type="NCBIfam" id="NF000868">
    <property type="entry name" value="PRK00080.1"/>
    <property type="match status" value="1"/>
</dbReference>
<dbReference type="NCBIfam" id="TIGR00635">
    <property type="entry name" value="ruvB"/>
    <property type="match status" value="1"/>
</dbReference>
<dbReference type="PANTHER" id="PTHR42848">
    <property type="match status" value="1"/>
</dbReference>
<dbReference type="PANTHER" id="PTHR42848:SF1">
    <property type="entry name" value="HOLLIDAY JUNCTION BRANCH MIGRATION COMPLEX SUBUNIT RUVB"/>
    <property type="match status" value="1"/>
</dbReference>
<dbReference type="Pfam" id="PF17864">
    <property type="entry name" value="AAA_lid_4"/>
    <property type="match status" value="1"/>
</dbReference>
<dbReference type="Pfam" id="PF05491">
    <property type="entry name" value="RuvB_C"/>
    <property type="match status" value="1"/>
</dbReference>
<dbReference type="Pfam" id="PF05496">
    <property type="entry name" value="RuvB_N"/>
    <property type="match status" value="1"/>
</dbReference>
<dbReference type="SMART" id="SM00382">
    <property type="entry name" value="AAA"/>
    <property type="match status" value="1"/>
</dbReference>
<dbReference type="SUPFAM" id="SSF52540">
    <property type="entry name" value="P-loop containing nucleoside triphosphate hydrolases"/>
    <property type="match status" value="1"/>
</dbReference>
<dbReference type="SUPFAM" id="SSF46785">
    <property type="entry name" value="Winged helix' DNA-binding domain"/>
    <property type="match status" value="1"/>
</dbReference>
<protein>
    <recommendedName>
        <fullName evidence="1">Holliday junction branch migration complex subunit RuvB</fullName>
        <ecNumber evidence="1">3.6.4.-</ecNumber>
    </recommendedName>
</protein>
<feature type="chain" id="PRO_0000165519" description="Holliday junction branch migration complex subunit RuvB">
    <location>
        <begin position="1"/>
        <end position="349"/>
    </location>
</feature>
<feature type="region of interest" description="Large ATPase domain (RuvB-L)" evidence="1">
    <location>
        <begin position="1"/>
        <end position="181"/>
    </location>
</feature>
<feature type="region of interest" description="Small ATPAse domain (RuvB-S)" evidence="1">
    <location>
        <begin position="182"/>
        <end position="252"/>
    </location>
</feature>
<feature type="region of interest" description="Head domain (RuvB-H)" evidence="1">
    <location>
        <begin position="255"/>
        <end position="349"/>
    </location>
</feature>
<feature type="binding site" evidence="1">
    <location>
        <position position="20"/>
    </location>
    <ligand>
        <name>ATP</name>
        <dbReference type="ChEBI" id="CHEBI:30616"/>
    </ligand>
</feature>
<feature type="binding site" evidence="1">
    <location>
        <position position="21"/>
    </location>
    <ligand>
        <name>ATP</name>
        <dbReference type="ChEBI" id="CHEBI:30616"/>
    </ligand>
</feature>
<feature type="binding site" evidence="1">
    <location>
        <position position="62"/>
    </location>
    <ligand>
        <name>ATP</name>
        <dbReference type="ChEBI" id="CHEBI:30616"/>
    </ligand>
</feature>
<feature type="binding site" evidence="1">
    <location>
        <position position="65"/>
    </location>
    <ligand>
        <name>ATP</name>
        <dbReference type="ChEBI" id="CHEBI:30616"/>
    </ligand>
</feature>
<feature type="binding site" evidence="1">
    <location>
        <position position="66"/>
    </location>
    <ligand>
        <name>ATP</name>
        <dbReference type="ChEBI" id="CHEBI:30616"/>
    </ligand>
</feature>
<feature type="binding site" evidence="1">
    <location>
        <position position="66"/>
    </location>
    <ligand>
        <name>Mg(2+)</name>
        <dbReference type="ChEBI" id="CHEBI:18420"/>
    </ligand>
</feature>
<feature type="binding site" evidence="1">
    <location>
        <position position="67"/>
    </location>
    <ligand>
        <name>ATP</name>
        <dbReference type="ChEBI" id="CHEBI:30616"/>
    </ligand>
</feature>
<feature type="binding site" evidence="1">
    <location>
        <begin position="128"/>
        <end position="130"/>
    </location>
    <ligand>
        <name>ATP</name>
        <dbReference type="ChEBI" id="CHEBI:30616"/>
    </ligand>
</feature>
<feature type="binding site" evidence="1">
    <location>
        <position position="171"/>
    </location>
    <ligand>
        <name>ATP</name>
        <dbReference type="ChEBI" id="CHEBI:30616"/>
    </ligand>
</feature>
<feature type="binding site" evidence="1">
    <location>
        <position position="181"/>
    </location>
    <ligand>
        <name>ATP</name>
        <dbReference type="ChEBI" id="CHEBI:30616"/>
    </ligand>
</feature>
<feature type="binding site" evidence="1">
    <location>
        <position position="218"/>
    </location>
    <ligand>
        <name>ATP</name>
        <dbReference type="ChEBI" id="CHEBI:30616"/>
    </ligand>
</feature>
<feature type="binding site" evidence="1">
    <location>
        <position position="310"/>
    </location>
    <ligand>
        <name>DNA</name>
        <dbReference type="ChEBI" id="CHEBI:16991"/>
    </ligand>
</feature>
<feature type="binding site" evidence="1">
    <location>
        <position position="315"/>
    </location>
    <ligand>
        <name>DNA</name>
        <dbReference type="ChEBI" id="CHEBI:16991"/>
    </ligand>
</feature>
<comment type="function">
    <text evidence="1">The RuvA-RuvB-RuvC complex processes Holliday junction (HJ) DNA during genetic recombination and DNA repair, while the RuvA-RuvB complex plays an important role in the rescue of blocked DNA replication forks via replication fork reversal (RFR). RuvA specifically binds to HJ cruciform DNA, conferring on it an open structure. The RuvB hexamer acts as an ATP-dependent pump, pulling dsDNA into and through the RuvAB complex. RuvB forms 2 homohexamers on either side of HJ DNA bound by 1 or 2 RuvA tetramers; 4 subunits per hexamer contact DNA at a time. Coordinated motions by a converter formed by DNA-disengaged RuvB subunits stimulates ATP hydrolysis and nucleotide exchange. Immobilization of the converter enables RuvB to convert the ATP-contained energy into a lever motion, pulling 2 nucleotides of DNA out of the RuvA tetramer per ATP hydrolyzed, thus driving DNA branch migration. The RuvB motors rotate together with the DNA substrate, which together with the progressing nucleotide cycle form the mechanistic basis for DNA recombination by continuous HJ branch migration. Branch migration allows RuvC to scan DNA until it finds its consensus sequence, where it cleaves and resolves cruciform DNA.</text>
</comment>
<comment type="catalytic activity">
    <reaction evidence="1">
        <text>ATP + H2O = ADP + phosphate + H(+)</text>
        <dbReference type="Rhea" id="RHEA:13065"/>
        <dbReference type="ChEBI" id="CHEBI:15377"/>
        <dbReference type="ChEBI" id="CHEBI:15378"/>
        <dbReference type="ChEBI" id="CHEBI:30616"/>
        <dbReference type="ChEBI" id="CHEBI:43474"/>
        <dbReference type="ChEBI" id="CHEBI:456216"/>
    </reaction>
</comment>
<comment type="subunit">
    <text evidence="1">Homohexamer. Forms an RuvA(8)-RuvB(12)-Holliday junction (HJ) complex. HJ DNA is sandwiched between 2 RuvA tetramers; dsDNA enters through RuvA and exits via RuvB. An RuvB hexamer assembles on each DNA strand where it exits the tetramer. Each RuvB hexamer is contacted by two RuvA subunits (via domain III) on 2 adjacent RuvB subunits; this complex drives branch migration. In the full resolvosome a probable DNA-RuvA(4)-RuvB(12)-RuvC(2) complex forms which resolves the HJ.</text>
</comment>
<comment type="subcellular location">
    <subcellularLocation>
        <location evidence="1">Cytoplasm</location>
    </subcellularLocation>
</comment>
<comment type="domain">
    <text evidence="1">Has 3 domains, the large (RuvB-L) and small ATPase (RuvB-S) domains and the C-terminal head (RuvB-H) domain. The head domain binds DNA, while the ATPase domains jointly bind ATP, ADP or are empty depending on the state of the subunit in the translocation cycle. During a single DNA translocation step the structure of each domain remains the same, but their relative positions change.</text>
</comment>
<comment type="similarity">
    <text evidence="1">Belongs to the RuvB family.</text>
</comment>
<sequence>MDDRILTSVNLEEDSAEYNLRPQKLNEYIGQSKVKEKMDIFIRAAKKRGEALDHVLFYGPPGLGKTTLANIIAKEMGGNLKVTSGPAIERAGDLAAILTGLSEYDVLFIDEIHRLNRSVEEILYPAMEDYALDIIIGKGAAAKSIRLDLPKFTLIGATTRVGLLTAPLRDRFGVLCPMEFYNDEELKEIIVRSSSILDIDIDEDAALEIAMRSRGTPRIANRLLKRVRDYADVKGRGIVNLDSAKKALNLLEVDDEGFDSIDNKIIQAIVNNFAGGPVGIETLSYFVGEEIDTIEDVYEPYLLQKGFIMRTPRGRMATKKAYEHLKVPFNMKKNGTVNNDQCSFFKKEK</sequence>
<keyword id="KW-0067">ATP-binding</keyword>
<keyword id="KW-0963">Cytoplasm</keyword>
<keyword id="KW-0227">DNA damage</keyword>
<keyword id="KW-0233">DNA recombination</keyword>
<keyword id="KW-0234">DNA repair</keyword>
<keyword id="KW-0238">DNA-binding</keyword>
<keyword id="KW-0378">Hydrolase</keyword>
<keyword id="KW-0547">Nucleotide-binding</keyword>
<keyword id="KW-1185">Reference proteome</keyword>
<accession>Q97GT1</accession>
<reference key="1">
    <citation type="journal article" date="2001" name="J. Bacteriol.">
        <title>Genome sequence and comparative analysis of the solvent-producing bacterium Clostridium acetobutylicum.</title>
        <authorList>
            <person name="Noelling J."/>
            <person name="Breton G."/>
            <person name="Omelchenko M.V."/>
            <person name="Makarova K.S."/>
            <person name="Zeng Q."/>
            <person name="Gibson R."/>
            <person name="Lee H.M."/>
            <person name="Dubois J."/>
            <person name="Qiu D."/>
            <person name="Hitti J."/>
            <person name="Wolf Y.I."/>
            <person name="Tatusov R.L."/>
            <person name="Sabathe F."/>
            <person name="Doucette-Stamm L.A."/>
            <person name="Soucaille P."/>
            <person name="Daly M.J."/>
            <person name="Bennett G.N."/>
            <person name="Koonin E.V."/>
            <person name="Smith D.R."/>
        </authorList>
    </citation>
    <scope>NUCLEOTIDE SEQUENCE [LARGE SCALE GENOMIC DNA]</scope>
    <source>
        <strain>ATCC 824 / DSM 792 / JCM 1419 / IAM 19013 / LMG 5710 / NBRC 13948 / NRRL B-527 / VKM B-1787 / 2291 / W</strain>
    </source>
</reference>
<name>RUVB_CLOAB</name>
<proteinExistence type="inferred from homology"/>
<evidence type="ECO:0000255" key="1">
    <source>
        <dbReference type="HAMAP-Rule" id="MF_00016"/>
    </source>
</evidence>
<organism>
    <name type="scientific">Clostridium acetobutylicum (strain ATCC 824 / DSM 792 / JCM 1419 / IAM 19013 / LMG 5710 / NBRC 13948 / NRRL B-527 / VKM B-1787 / 2291 / W)</name>
    <dbReference type="NCBI Taxonomy" id="272562"/>
    <lineage>
        <taxon>Bacteria</taxon>
        <taxon>Bacillati</taxon>
        <taxon>Bacillota</taxon>
        <taxon>Clostridia</taxon>
        <taxon>Eubacteriales</taxon>
        <taxon>Clostridiaceae</taxon>
        <taxon>Clostridium</taxon>
    </lineage>
</organism>